<feature type="chain" id="PRO_1000058194" description="4-hydroxy-3-methylbut-2-en-1-yl diphosphate synthase (flavodoxin)">
    <location>
        <begin position="1"/>
        <end position="372"/>
    </location>
</feature>
<feature type="binding site" evidence="1">
    <location>
        <position position="270"/>
    </location>
    <ligand>
        <name>[4Fe-4S] cluster</name>
        <dbReference type="ChEBI" id="CHEBI:49883"/>
    </ligand>
</feature>
<feature type="binding site" evidence="1">
    <location>
        <position position="273"/>
    </location>
    <ligand>
        <name>[4Fe-4S] cluster</name>
        <dbReference type="ChEBI" id="CHEBI:49883"/>
    </ligand>
</feature>
<feature type="binding site" evidence="1">
    <location>
        <position position="305"/>
    </location>
    <ligand>
        <name>[4Fe-4S] cluster</name>
        <dbReference type="ChEBI" id="CHEBI:49883"/>
    </ligand>
</feature>
<feature type="binding site" evidence="1">
    <location>
        <position position="312"/>
    </location>
    <ligand>
        <name>[4Fe-4S] cluster</name>
        <dbReference type="ChEBI" id="CHEBI:49883"/>
    </ligand>
</feature>
<accession>A7ZPV8</accession>
<keyword id="KW-0004">4Fe-4S</keyword>
<keyword id="KW-0408">Iron</keyword>
<keyword id="KW-0411">Iron-sulfur</keyword>
<keyword id="KW-0414">Isoprene biosynthesis</keyword>
<keyword id="KW-0479">Metal-binding</keyword>
<keyword id="KW-0560">Oxidoreductase</keyword>
<keyword id="KW-1185">Reference proteome</keyword>
<protein>
    <recommendedName>
        <fullName evidence="1">4-hydroxy-3-methylbut-2-en-1-yl diphosphate synthase (flavodoxin)</fullName>
        <ecNumber evidence="1">1.17.7.3</ecNumber>
    </recommendedName>
    <alternativeName>
        <fullName evidence="1">1-hydroxy-2-methyl-2-(E)-butenyl 4-diphosphate synthase</fullName>
    </alternativeName>
</protein>
<sequence length="372" mass="40684">MHNQAPIQRRKSTRIYVGNVPIGDGAPIAVQSMTNTRTTDVEATVNQIKALERVGADIVRVSVPTMDAAEAFKLIKQQVNVPLVADIHFDYRIALKVAEYGVDCLRINPGNIGNEERIRMVVDCARDKNIPIRIGVNAGSLEKDLQEKYGEPTPQALLESAMRHVDHLDRLNFDQFKVSVKASDVFLAVESYRLLAKQIDQPLHLGITEAGGARSGAVKSAIGLGLLLSEGIGDTLRVSLAADPVEEIKVGFDILKSLRIRSRGINFIACPTCSRQEFDVIGTVNALEQRLEDIITPMDVSIIGCVVNGPGEALVSTLGVTGGNKKSGLYEDGVRKDRLDNNDMIDQLEARIRAKASQLDEARRIDVQQVEK</sequence>
<name>ISPG_ECO24</name>
<gene>
    <name evidence="1" type="primary">ispG</name>
    <name type="ordered locus">EcE24377A_2799</name>
</gene>
<reference key="1">
    <citation type="journal article" date="2008" name="J. Bacteriol.">
        <title>The pangenome structure of Escherichia coli: comparative genomic analysis of E. coli commensal and pathogenic isolates.</title>
        <authorList>
            <person name="Rasko D.A."/>
            <person name="Rosovitz M.J."/>
            <person name="Myers G.S.A."/>
            <person name="Mongodin E.F."/>
            <person name="Fricke W.F."/>
            <person name="Gajer P."/>
            <person name="Crabtree J."/>
            <person name="Sebaihia M."/>
            <person name="Thomson N.R."/>
            <person name="Chaudhuri R."/>
            <person name="Henderson I.R."/>
            <person name="Sperandio V."/>
            <person name="Ravel J."/>
        </authorList>
    </citation>
    <scope>NUCLEOTIDE SEQUENCE [LARGE SCALE GENOMIC DNA]</scope>
    <source>
        <strain>E24377A / ETEC</strain>
    </source>
</reference>
<organism>
    <name type="scientific">Escherichia coli O139:H28 (strain E24377A / ETEC)</name>
    <dbReference type="NCBI Taxonomy" id="331111"/>
    <lineage>
        <taxon>Bacteria</taxon>
        <taxon>Pseudomonadati</taxon>
        <taxon>Pseudomonadota</taxon>
        <taxon>Gammaproteobacteria</taxon>
        <taxon>Enterobacterales</taxon>
        <taxon>Enterobacteriaceae</taxon>
        <taxon>Escherichia</taxon>
    </lineage>
</organism>
<dbReference type="EC" id="1.17.7.3" evidence="1"/>
<dbReference type="EMBL" id="CP000800">
    <property type="protein sequence ID" value="ABV20634.1"/>
    <property type="molecule type" value="Genomic_DNA"/>
</dbReference>
<dbReference type="RefSeq" id="WP_000551807.1">
    <property type="nucleotide sequence ID" value="NC_009801.1"/>
</dbReference>
<dbReference type="SMR" id="A7ZPV8"/>
<dbReference type="GeneID" id="86947404"/>
<dbReference type="KEGG" id="ecw:EcE24377A_2799"/>
<dbReference type="HOGENOM" id="CLU_042258_0_0_6"/>
<dbReference type="UniPathway" id="UPA00056">
    <property type="reaction ID" value="UER00096"/>
</dbReference>
<dbReference type="Proteomes" id="UP000001122">
    <property type="component" value="Chromosome"/>
</dbReference>
<dbReference type="GO" id="GO:0051539">
    <property type="term" value="F:4 iron, 4 sulfur cluster binding"/>
    <property type="evidence" value="ECO:0007669"/>
    <property type="project" value="UniProtKB-UniRule"/>
</dbReference>
<dbReference type="GO" id="GO:0046429">
    <property type="term" value="F:4-hydroxy-3-methylbut-2-en-1-yl diphosphate synthase activity (ferredoxin)"/>
    <property type="evidence" value="ECO:0007669"/>
    <property type="project" value="UniProtKB-UniRule"/>
</dbReference>
<dbReference type="GO" id="GO:0141197">
    <property type="term" value="F:4-hydroxy-3-methylbut-2-enyl-diphosphate synthase activity (flavodoxin)"/>
    <property type="evidence" value="ECO:0007669"/>
    <property type="project" value="UniProtKB-EC"/>
</dbReference>
<dbReference type="GO" id="GO:0005506">
    <property type="term" value="F:iron ion binding"/>
    <property type="evidence" value="ECO:0007669"/>
    <property type="project" value="InterPro"/>
</dbReference>
<dbReference type="GO" id="GO:0019288">
    <property type="term" value="P:isopentenyl diphosphate biosynthetic process, methylerythritol 4-phosphate pathway"/>
    <property type="evidence" value="ECO:0007669"/>
    <property type="project" value="UniProtKB-UniRule"/>
</dbReference>
<dbReference type="GO" id="GO:0016114">
    <property type="term" value="P:terpenoid biosynthetic process"/>
    <property type="evidence" value="ECO:0007669"/>
    <property type="project" value="InterPro"/>
</dbReference>
<dbReference type="FunFam" id="3.20.20.20:FF:000001">
    <property type="entry name" value="4-hydroxy-3-methylbut-2-en-1-yl diphosphate synthase (flavodoxin)"/>
    <property type="match status" value="1"/>
</dbReference>
<dbReference type="FunFam" id="3.30.413.10:FF:000002">
    <property type="entry name" value="4-hydroxy-3-methylbut-2-en-1-yl diphosphate synthase (flavodoxin)"/>
    <property type="match status" value="1"/>
</dbReference>
<dbReference type="Gene3D" id="3.20.20.20">
    <property type="entry name" value="Dihydropteroate synthase-like"/>
    <property type="match status" value="1"/>
</dbReference>
<dbReference type="Gene3D" id="3.30.413.10">
    <property type="entry name" value="Sulfite Reductase Hemoprotein, domain 1"/>
    <property type="match status" value="1"/>
</dbReference>
<dbReference type="HAMAP" id="MF_00159">
    <property type="entry name" value="IspG"/>
    <property type="match status" value="1"/>
</dbReference>
<dbReference type="InterPro" id="IPR011005">
    <property type="entry name" value="Dihydropteroate_synth-like_sf"/>
</dbReference>
<dbReference type="InterPro" id="IPR016425">
    <property type="entry name" value="IspG_bac"/>
</dbReference>
<dbReference type="InterPro" id="IPR004588">
    <property type="entry name" value="IspG_bac-typ"/>
</dbReference>
<dbReference type="InterPro" id="IPR045854">
    <property type="entry name" value="NO2/SO3_Rdtase_4Fe4S_sf"/>
</dbReference>
<dbReference type="NCBIfam" id="TIGR00612">
    <property type="entry name" value="ispG_gcpE"/>
    <property type="match status" value="1"/>
</dbReference>
<dbReference type="NCBIfam" id="NF001540">
    <property type="entry name" value="PRK00366.1"/>
    <property type="match status" value="1"/>
</dbReference>
<dbReference type="PANTHER" id="PTHR30454">
    <property type="entry name" value="4-HYDROXY-3-METHYLBUT-2-EN-1-YL DIPHOSPHATE SYNTHASE"/>
    <property type="match status" value="1"/>
</dbReference>
<dbReference type="PANTHER" id="PTHR30454:SF0">
    <property type="entry name" value="4-HYDROXY-3-METHYLBUT-2-EN-1-YL DIPHOSPHATE SYNTHASE (FERREDOXIN), CHLOROPLASTIC"/>
    <property type="match status" value="1"/>
</dbReference>
<dbReference type="Pfam" id="PF04551">
    <property type="entry name" value="GcpE"/>
    <property type="match status" value="1"/>
</dbReference>
<dbReference type="PIRSF" id="PIRSF004640">
    <property type="entry name" value="IspG"/>
    <property type="match status" value="1"/>
</dbReference>
<dbReference type="SUPFAM" id="SSF51717">
    <property type="entry name" value="Dihydropteroate synthetase-like"/>
    <property type="match status" value="1"/>
</dbReference>
<dbReference type="SUPFAM" id="SSF56014">
    <property type="entry name" value="Nitrite and sulphite reductase 4Fe-4S domain-like"/>
    <property type="match status" value="1"/>
</dbReference>
<comment type="function">
    <text evidence="1">Converts 2C-methyl-D-erythritol 2,4-cyclodiphosphate (ME-2,4cPP) into 1-hydroxy-2-methyl-2-(E)-butenyl 4-diphosphate.</text>
</comment>
<comment type="catalytic activity">
    <reaction evidence="1">
        <text>(2E)-4-hydroxy-3-methylbut-2-enyl diphosphate + oxidized [flavodoxin] + H2O + 2 H(+) = 2-C-methyl-D-erythritol 2,4-cyclic diphosphate + reduced [flavodoxin]</text>
        <dbReference type="Rhea" id="RHEA:43604"/>
        <dbReference type="Rhea" id="RHEA-COMP:10622"/>
        <dbReference type="Rhea" id="RHEA-COMP:10623"/>
        <dbReference type="ChEBI" id="CHEBI:15377"/>
        <dbReference type="ChEBI" id="CHEBI:15378"/>
        <dbReference type="ChEBI" id="CHEBI:57618"/>
        <dbReference type="ChEBI" id="CHEBI:58210"/>
        <dbReference type="ChEBI" id="CHEBI:58483"/>
        <dbReference type="ChEBI" id="CHEBI:128753"/>
        <dbReference type="EC" id="1.17.7.3"/>
    </reaction>
</comment>
<comment type="cofactor">
    <cofactor evidence="1">
        <name>[4Fe-4S] cluster</name>
        <dbReference type="ChEBI" id="CHEBI:49883"/>
    </cofactor>
    <text evidence="1">Binds 1 [4Fe-4S] cluster.</text>
</comment>
<comment type="pathway">
    <text evidence="1">Isoprenoid biosynthesis; isopentenyl diphosphate biosynthesis via DXP pathway; isopentenyl diphosphate from 1-deoxy-D-xylulose 5-phosphate: step 5/6.</text>
</comment>
<comment type="similarity">
    <text evidence="1">Belongs to the IspG family.</text>
</comment>
<proteinExistence type="inferred from homology"/>
<evidence type="ECO:0000255" key="1">
    <source>
        <dbReference type="HAMAP-Rule" id="MF_00159"/>
    </source>
</evidence>